<dbReference type="EMBL" id="AM180355">
    <property type="protein sequence ID" value="CAJ68142.1"/>
    <property type="molecule type" value="Genomic_DNA"/>
</dbReference>
<dbReference type="RefSeq" id="WP_009889069.1">
    <property type="nucleotide sequence ID" value="NZ_JAUPES010000027.1"/>
</dbReference>
<dbReference type="RefSeq" id="YP_001087780.1">
    <property type="nucleotide sequence ID" value="NC_009089.1"/>
</dbReference>
<dbReference type="SMR" id="Q18BF0"/>
<dbReference type="STRING" id="272563.CD630_12860"/>
<dbReference type="EnsemblBacteria" id="CAJ68142">
    <property type="protein sequence ID" value="CAJ68142"/>
    <property type="gene ID" value="CD630_12860"/>
</dbReference>
<dbReference type="KEGG" id="cdf:CD630_12860"/>
<dbReference type="KEGG" id="pdc:CDIF630_01440"/>
<dbReference type="PATRIC" id="fig|272563.120.peg.1344"/>
<dbReference type="eggNOG" id="COG3906">
    <property type="taxonomic scope" value="Bacteria"/>
</dbReference>
<dbReference type="OrthoDB" id="9811971at2"/>
<dbReference type="PhylomeDB" id="Q18BF0"/>
<dbReference type="BioCyc" id="PDIF272563:G12WB-1420-MONOMER"/>
<dbReference type="Proteomes" id="UP000001978">
    <property type="component" value="Chromosome"/>
</dbReference>
<dbReference type="HAMAP" id="MF_01448">
    <property type="entry name" value="UPF0473"/>
    <property type="match status" value="1"/>
</dbReference>
<dbReference type="InterPro" id="IPR009711">
    <property type="entry name" value="UPF0473"/>
</dbReference>
<dbReference type="PANTHER" id="PTHR40066">
    <property type="entry name" value="UPF0473 PROTEIN CBO2561/CLC_2432"/>
    <property type="match status" value="1"/>
</dbReference>
<dbReference type="PANTHER" id="PTHR40066:SF1">
    <property type="entry name" value="UPF0473 PROTEIN CBO2561_CLC_2432"/>
    <property type="match status" value="1"/>
</dbReference>
<dbReference type="Pfam" id="PF06949">
    <property type="entry name" value="DUF1292"/>
    <property type="match status" value="1"/>
</dbReference>
<accession>Q18BF0</accession>
<proteinExistence type="inferred from homology"/>
<reference key="1">
    <citation type="journal article" date="2006" name="Nat. Genet.">
        <title>The multidrug-resistant human pathogen Clostridium difficile has a highly mobile, mosaic genome.</title>
        <authorList>
            <person name="Sebaihia M."/>
            <person name="Wren B.W."/>
            <person name="Mullany P."/>
            <person name="Fairweather N.F."/>
            <person name="Minton N."/>
            <person name="Stabler R."/>
            <person name="Thomson N.R."/>
            <person name="Roberts A.P."/>
            <person name="Cerdeno-Tarraga A.M."/>
            <person name="Wang H."/>
            <person name="Holden M.T.G."/>
            <person name="Wright A."/>
            <person name="Churcher C."/>
            <person name="Quail M.A."/>
            <person name="Baker S."/>
            <person name="Bason N."/>
            <person name="Brooks K."/>
            <person name="Chillingworth T."/>
            <person name="Cronin A."/>
            <person name="Davis P."/>
            <person name="Dowd L."/>
            <person name="Fraser A."/>
            <person name="Feltwell T."/>
            <person name="Hance Z."/>
            <person name="Holroyd S."/>
            <person name="Jagels K."/>
            <person name="Moule S."/>
            <person name="Mungall K."/>
            <person name="Price C."/>
            <person name="Rabbinowitsch E."/>
            <person name="Sharp S."/>
            <person name="Simmonds M."/>
            <person name="Stevens K."/>
            <person name="Unwin L."/>
            <person name="Whithead S."/>
            <person name="Dupuy B."/>
            <person name="Dougan G."/>
            <person name="Barrell B."/>
            <person name="Parkhill J."/>
        </authorList>
    </citation>
    <scope>NUCLEOTIDE SEQUENCE [LARGE SCALE GENOMIC DNA]</scope>
    <source>
        <strain>630</strain>
    </source>
</reference>
<evidence type="ECO:0000255" key="1">
    <source>
        <dbReference type="HAMAP-Rule" id="MF_01448"/>
    </source>
</evidence>
<gene>
    <name type="ordered locus">CD630_12860</name>
</gene>
<sequence length="95" mass="10848">MEENIINLIDENGVESQFEIILTLEAEGKEYAILMPLDDEEAEEALIFRIDEDEEGEILIPLESDEEYETVVAVYTAIMEEEGLNYDEDESNGLN</sequence>
<comment type="similarity">
    <text evidence="1">Belongs to the UPF0473 family.</text>
</comment>
<keyword id="KW-1185">Reference proteome</keyword>
<organism>
    <name type="scientific">Clostridioides difficile (strain 630)</name>
    <name type="common">Peptoclostridium difficile</name>
    <dbReference type="NCBI Taxonomy" id="272563"/>
    <lineage>
        <taxon>Bacteria</taxon>
        <taxon>Bacillati</taxon>
        <taxon>Bacillota</taxon>
        <taxon>Clostridia</taxon>
        <taxon>Peptostreptococcales</taxon>
        <taxon>Peptostreptococcaceae</taxon>
        <taxon>Clostridioides</taxon>
    </lineage>
</organism>
<name>Y1286_CLOD6</name>
<protein>
    <recommendedName>
        <fullName evidence="1">UPF0473 protein CD630_12860</fullName>
    </recommendedName>
</protein>
<feature type="chain" id="PRO_0000304822" description="UPF0473 protein CD630_12860">
    <location>
        <begin position="1"/>
        <end position="95"/>
    </location>
</feature>